<gene>
    <name evidence="1" type="primary">leuC</name>
    <name type="ordered locus">ECSE_0072</name>
</gene>
<comment type="function">
    <text evidence="1">Catalyzes the isomerization between 2-isopropylmalate and 3-isopropylmalate, via the formation of 2-isopropylmaleate.</text>
</comment>
<comment type="catalytic activity">
    <reaction evidence="1">
        <text>(2R,3S)-3-isopropylmalate = (2S)-2-isopropylmalate</text>
        <dbReference type="Rhea" id="RHEA:32287"/>
        <dbReference type="ChEBI" id="CHEBI:1178"/>
        <dbReference type="ChEBI" id="CHEBI:35121"/>
        <dbReference type="EC" id="4.2.1.33"/>
    </reaction>
</comment>
<comment type="cofactor">
    <cofactor evidence="1">
        <name>[4Fe-4S] cluster</name>
        <dbReference type="ChEBI" id="CHEBI:49883"/>
    </cofactor>
    <text evidence="1">Binds 1 [4Fe-4S] cluster per subunit.</text>
</comment>
<comment type="pathway">
    <text evidence="1">Amino-acid biosynthesis; L-leucine biosynthesis; L-leucine from 3-methyl-2-oxobutanoate: step 2/4.</text>
</comment>
<comment type="subunit">
    <text evidence="1">Heterodimer of LeuC and LeuD.</text>
</comment>
<comment type="similarity">
    <text evidence="1">Belongs to the aconitase/IPM isomerase family. LeuC type 1 subfamily.</text>
</comment>
<dbReference type="EC" id="4.2.1.33" evidence="1"/>
<dbReference type="EMBL" id="AP009240">
    <property type="protein sequence ID" value="BAG75596.1"/>
    <property type="molecule type" value="Genomic_DNA"/>
</dbReference>
<dbReference type="RefSeq" id="WP_001140652.1">
    <property type="nucleotide sequence ID" value="NC_011415.1"/>
</dbReference>
<dbReference type="SMR" id="B6HZ52"/>
<dbReference type="GeneID" id="75202111"/>
<dbReference type="KEGG" id="ecy:ECSE_0072"/>
<dbReference type="HOGENOM" id="CLU_006714_3_4_6"/>
<dbReference type="UniPathway" id="UPA00048">
    <property type="reaction ID" value="UER00071"/>
</dbReference>
<dbReference type="Proteomes" id="UP000008199">
    <property type="component" value="Chromosome"/>
</dbReference>
<dbReference type="GO" id="GO:0003861">
    <property type="term" value="F:3-isopropylmalate dehydratase activity"/>
    <property type="evidence" value="ECO:0007669"/>
    <property type="project" value="UniProtKB-UniRule"/>
</dbReference>
<dbReference type="GO" id="GO:0051539">
    <property type="term" value="F:4 iron, 4 sulfur cluster binding"/>
    <property type="evidence" value="ECO:0007669"/>
    <property type="project" value="UniProtKB-KW"/>
</dbReference>
<dbReference type="GO" id="GO:0046872">
    <property type="term" value="F:metal ion binding"/>
    <property type="evidence" value="ECO:0007669"/>
    <property type="project" value="UniProtKB-KW"/>
</dbReference>
<dbReference type="GO" id="GO:0009098">
    <property type="term" value="P:L-leucine biosynthetic process"/>
    <property type="evidence" value="ECO:0007669"/>
    <property type="project" value="UniProtKB-UniRule"/>
</dbReference>
<dbReference type="CDD" id="cd01583">
    <property type="entry name" value="IPMI"/>
    <property type="match status" value="1"/>
</dbReference>
<dbReference type="FunFam" id="3.30.499.10:FF:000006">
    <property type="entry name" value="3-isopropylmalate dehydratase large subunit"/>
    <property type="match status" value="1"/>
</dbReference>
<dbReference type="FunFam" id="3.30.499.10:FF:000007">
    <property type="entry name" value="3-isopropylmalate dehydratase large subunit"/>
    <property type="match status" value="1"/>
</dbReference>
<dbReference type="Gene3D" id="3.30.499.10">
    <property type="entry name" value="Aconitase, domain 3"/>
    <property type="match status" value="2"/>
</dbReference>
<dbReference type="HAMAP" id="MF_01026">
    <property type="entry name" value="LeuC_type1"/>
    <property type="match status" value="1"/>
</dbReference>
<dbReference type="InterPro" id="IPR004430">
    <property type="entry name" value="3-IsopropMal_deHydase_lsu"/>
</dbReference>
<dbReference type="InterPro" id="IPR015931">
    <property type="entry name" value="Acnase/IPM_dHydase_lsu_aba_1/3"/>
</dbReference>
<dbReference type="InterPro" id="IPR001030">
    <property type="entry name" value="Acoase/IPM_deHydtase_lsu_aba"/>
</dbReference>
<dbReference type="InterPro" id="IPR018136">
    <property type="entry name" value="Aconitase_4Fe-4S_BS"/>
</dbReference>
<dbReference type="InterPro" id="IPR036008">
    <property type="entry name" value="Aconitase_4Fe-4S_dom"/>
</dbReference>
<dbReference type="InterPro" id="IPR050067">
    <property type="entry name" value="IPM_dehydratase_rel_enz"/>
</dbReference>
<dbReference type="InterPro" id="IPR033941">
    <property type="entry name" value="IPMI_cat"/>
</dbReference>
<dbReference type="NCBIfam" id="TIGR00170">
    <property type="entry name" value="leuC"/>
    <property type="match status" value="1"/>
</dbReference>
<dbReference type="NCBIfam" id="NF004016">
    <property type="entry name" value="PRK05478.1"/>
    <property type="match status" value="1"/>
</dbReference>
<dbReference type="NCBIfam" id="NF009116">
    <property type="entry name" value="PRK12466.1"/>
    <property type="match status" value="1"/>
</dbReference>
<dbReference type="PANTHER" id="PTHR43822:SF9">
    <property type="entry name" value="3-ISOPROPYLMALATE DEHYDRATASE"/>
    <property type="match status" value="1"/>
</dbReference>
<dbReference type="PANTHER" id="PTHR43822">
    <property type="entry name" value="HOMOACONITASE, MITOCHONDRIAL-RELATED"/>
    <property type="match status" value="1"/>
</dbReference>
<dbReference type="Pfam" id="PF00330">
    <property type="entry name" value="Aconitase"/>
    <property type="match status" value="1"/>
</dbReference>
<dbReference type="PRINTS" id="PR00415">
    <property type="entry name" value="ACONITASE"/>
</dbReference>
<dbReference type="SUPFAM" id="SSF53732">
    <property type="entry name" value="Aconitase iron-sulfur domain"/>
    <property type="match status" value="1"/>
</dbReference>
<dbReference type="PROSITE" id="PS00450">
    <property type="entry name" value="ACONITASE_1"/>
    <property type="match status" value="1"/>
</dbReference>
<dbReference type="PROSITE" id="PS01244">
    <property type="entry name" value="ACONITASE_2"/>
    <property type="match status" value="1"/>
</dbReference>
<feature type="chain" id="PRO_1000135684" description="3-isopropylmalate dehydratase large subunit">
    <location>
        <begin position="1"/>
        <end position="466"/>
    </location>
</feature>
<feature type="binding site" evidence="1">
    <location>
        <position position="347"/>
    </location>
    <ligand>
        <name>[4Fe-4S] cluster</name>
        <dbReference type="ChEBI" id="CHEBI:49883"/>
    </ligand>
</feature>
<feature type="binding site" evidence="1">
    <location>
        <position position="407"/>
    </location>
    <ligand>
        <name>[4Fe-4S] cluster</name>
        <dbReference type="ChEBI" id="CHEBI:49883"/>
    </ligand>
</feature>
<feature type="binding site" evidence="1">
    <location>
        <position position="410"/>
    </location>
    <ligand>
        <name>[4Fe-4S] cluster</name>
        <dbReference type="ChEBI" id="CHEBI:49883"/>
    </ligand>
</feature>
<proteinExistence type="inferred from homology"/>
<keyword id="KW-0004">4Fe-4S</keyword>
<keyword id="KW-0028">Amino-acid biosynthesis</keyword>
<keyword id="KW-0100">Branched-chain amino acid biosynthesis</keyword>
<keyword id="KW-0408">Iron</keyword>
<keyword id="KW-0411">Iron-sulfur</keyword>
<keyword id="KW-0432">Leucine biosynthesis</keyword>
<keyword id="KW-0456">Lyase</keyword>
<keyword id="KW-0479">Metal-binding</keyword>
<sequence>MAKTLYEKLFDAHVVYEAENETPLLYIDRHLVHEVTSPQAFDGLRAHGRPVRQPGKTFATMDHNVSTQTKDINACGEMARIQMQELIKNCKEFGVELYDLNHPYQGIVHVMGPEQGVTLPGMTIVCGDSHTATHGAFGALAFGIGTSEVEHVLATQTLKQGRAKTMKIEVQGKAAPGITAKDIVLAIIGKTGSAGGTGHVVEFCGEAIRDLSMEGRMTLCNMAIEMGAKAGLVAPDETTFNYVKGRLHAPKGKDFDDAVAYWKTLQTDEGATFDTVVTLQAEEISPQVTWGTNPGQVISVNDNIPDPASFADPVERASAEKALAYMGLKPGIPLTEVAIDKVFIGSCTNSRIEDLRAAAEIAKGRKVAPGVQALVVPGSGPVKAQAEAEGLDKIFIEAGFEWRLPGCSMCLAMNNDRLNPGERCASTSNRNFEGRQGRGGRTHLVSPAMAAAAAVTGHFADIRNIK</sequence>
<name>LEUC_ECOSE</name>
<organism>
    <name type="scientific">Escherichia coli (strain SE11)</name>
    <dbReference type="NCBI Taxonomy" id="409438"/>
    <lineage>
        <taxon>Bacteria</taxon>
        <taxon>Pseudomonadati</taxon>
        <taxon>Pseudomonadota</taxon>
        <taxon>Gammaproteobacteria</taxon>
        <taxon>Enterobacterales</taxon>
        <taxon>Enterobacteriaceae</taxon>
        <taxon>Escherichia</taxon>
    </lineage>
</organism>
<protein>
    <recommendedName>
        <fullName evidence="1">3-isopropylmalate dehydratase large subunit</fullName>
        <ecNumber evidence="1">4.2.1.33</ecNumber>
    </recommendedName>
    <alternativeName>
        <fullName evidence="1">Alpha-IPM isomerase</fullName>
        <shortName evidence="1">IPMI</shortName>
    </alternativeName>
    <alternativeName>
        <fullName evidence="1">Isopropylmalate isomerase</fullName>
    </alternativeName>
</protein>
<accession>B6HZ52</accession>
<evidence type="ECO:0000255" key="1">
    <source>
        <dbReference type="HAMAP-Rule" id="MF_01026"/>
    </source>
</evidence>
<reference key="1">
    <citation type="journal article" date="2008" name="DNA Res.">
        <title>Complete genome sequence and comparative analysis of the wild-type commensal Escherichia coli strain SE11 isolated from a healthy adult.</title>
        <authorList>
            <person name="Oshima K."/>
            <person name="Toh H."/>
            <person name="Ogura Y."/>
            <person name="Sasamoto H."/>
            <person name="Morita H."/>
            <person name="Park S.-H."/>
            <person name="Ooka T."/>
            <person name="Iyoda S."/>
            <person name="Taylor T.D."/>
            <person name="Hayashi T."/>
            <person name="Itoh K."/>
            <person name="Hattori M."/>
        </authorList>
    </citation>
    <scope>NUCLEOTIDE SEQUENCE [LARGE SCALE GENOMIC DNA]</scope>
    <source>
        <strain>SE11</strain>
    </source>
</reference>